<protein>
    <recommendedName>
        <fullName>Uncharacterized protein y4aO</fullName>
    </recommendedName>
</protein>
<geneLocation type="plasmid">
    <name>sym pNGR234a</name>
</geneLocation>
<comment type="similarity">
    <text evidence="1">To R.meliloti RA0936 and y4nF.</text>
</comment>
<organism>
    <name type="scientific">Sinorhizobium fredii (strain NBRC 101917 / NGR234)</name>
    <dbReference type="NCBI Taxonomy" id="394"/>
    <lineage>
        <taxon>Bacteria</taxon>
        <taxon>Pseudomonadati</taxon>
        <taxon>Pseudomonadota</taxon>
        <taxon>Alphaproteobacteria</taxon>
        <taxon>Hyphomicrobiales</taxon>
        <taxon>Rhizobiaceae</taxon>
        <taxon>Sinorhizobium/Ensifer group</taxon>
        <taxon>Sinorhizobium</taxon>
    </lineage>
</organism>
<reference key="1">
    <citation type="journal article" date="1997" name="Nature">
        <title>Molecular basis of symbiosis between Rhizobium and legumes.</title>
        <authorList>
            <person name="Freiberg C.A."/>
            <person name="Fellay R."/>
            <person name="Bairoch A."/>
            <person name="Broughton W.J."/>
            <person name="Rosenthal A."/>
            <person name="Perret X."/>
        </authorList>
    </citation>
    <scope>NUCLEOTIDE SEQUENCE [LARGE SCALE GENOMIC DNA]</scope>
    <source>
        <strain>NBRC 101917 / NGR234</strain>
    </source>
</reference>
<reference key="2">
    <citation type="journal article" date="2009" name="Appl. Environ. Microbiol.">
        <title>Rhizobium sp. strain NGR234 possesses a remarkable number of secretion systems.</title>
        <authorList>
            <person name="Schmeisser C."/>
            <person name="Liesegang H."/>
            <person name="Krysciak D."/>
            <person name="Bakkou N."/>
            <person name="Le Quere A."/>
            <person name="Wollherr A."/>
            <person name="Heinemeyer I."/>
            <person name="Morgenstern B."/>
            <person name="Pommerening-Roeser A."/>
            <person name="Flores M."/>
            <person name="Palacios R."/>
            <person name="Brenner S."/>
            <person name="Gottschalk G."/>
            <person name="Schmitz R.A."/>
            <person name="Broughton W.J."/>
            <person name="Perret X."/>
            <person name="Strittmatter A.W."/>
            <person name="Streit W.R."/>
        </authorList>
    </citation>
    <scope>NUCLEOTIDE SEQUENCE [LARGE SCALE GENOMIC DNA]</scope>
    <source>
        <strain>NBRC 101917 / NGR234</strain>
    </source>
</reference>
<keyword id="KW-0614">Plasmid</keyword>
<keyword id="KW-1185">Reference proteome</keyword>
<proteinExistence type="predicted"/>
<accession>P55362</accession>
<name>Y4AO_SINFN</name>
<gene>
    <name type="ordered locus">NGR_a00330</name>
    <name type="ORF">y4aO</name>
</gene>
<evidence type="ECO:0000305" key="1"/>
<sequence length="192" mass="21825">MARFGADESWIACEIHMKTPPRRFIVEFKQARRRSKERTNSVWGNTDLKALTREVEEMAPHLFNLTEEPVSPNVAYGPPASPNAEFLIADKENIGLGPEAVTPAEGSENAFSGLLQETPPVSHTRTNSKQRISRKLPERLSLDVRENVERPISRGELATLEAENKRLKRLLAERILTQNLQLKKMLDRFNLN</sequence>
<dbReference type="EMBL" id="U00090">
    <property type="protein sequence ID" value="AAB91612.1"/>
    <property type="molecule type" value="Genomic_DNA"/>
</dbReference>
<dbReference type="RefSeq" id="NP_443774.1">
    <property type="nucleotide sequence ID" value="NC_000914.2"/>
</dbReference>
<dbReference type="SMR" id="P55362"/>
<dbReference type="KEGG" id="rhi:NGR_a00330"/>
<dbReference type="HOGENOM" id="CLU_1348176_0_0_5"/>
<dbReference type="OrthoDB" id="8454019at2"/>
<dbReference type="Proteomes" id="UP000001054">
    <property type="component" value="Plasmid pNGR234a"/>
</dbReference>
<feature type="chain" id="PRO_0000200800" description="Uncharacterized protein y4aO">
    <location>
        <begin position="1"/>
        <end position="192"/>
    </location>
</feature>